<evidence type="ECO:0000255" key="1">
    <source>
        <dbReference type="HAMAP-Rule" id="MF_00296"/>
    </source>
</evidence>
<protein>
    <recommendedName>
        <fullName evidence="1">Serine O-succinyltransferase</fullName>
        <shortName evidence="1">SST</shortName>
        <ecNumber evidence="1">2.3.1.-</ecNumber>
    </recommendedName>
</protein>
<sequence length="400" mass="43111">MTEFIPAGTLYHALPSPFPMKRGGVLHQARVAYETWGTLAADRSNAILIVTGLSPNAHAAANQANPEPGWWEAMLGPGKPIDTARWFVVCVNSLGSCKGSTGPASVNPATGAPYRLSFPDLSIEDVADAAADVVRALGIAQLACLIGNSMGGMTALALLLRHPGIARSHINISGSAQALPFSIAIRSLQREAIRLDPHWNGGHYDDARYPESGMRMARKLGVITYRSALEWDGRFGRVRLDSEQAADDPFGLEFQVESYLEGHARRFVRFFDPNCYLYLSRSMDWFDLAEHVDEQPATDSAIDHAHADALPASAKPQTGVSTADTVLAGLARIRIARALAIGANTDILFPVQQQEQIADGLRAGGADAHFIGLDSPQGHDAFLVDFARFGPAVRDFLQDC</sequence>
<reference key="1">
    <citation type="journal article" date="2005" name="J. Bacteriol.">
        <title>Insights into genome plasticity and pathogenicity of the plant pathogenic Bacterium Xanthomonas campestris pv. vesicatoria revealed by the complete genome sequence.</title>
        <authorList>
            <person name="Thieme F."/>
            <person name="Koebnik R."/>
            <person name="Bekel T."/>
            <person name="Berger C."/>
            <person name="Boch J."/>
            <person name="Buettner D."/>
            <person name="Caldana C."/>
            <person name="Gaigalat L."/>
            <person name="Goesmann A."/>
            <person name="Kay S."/>
            <person name="Kirchner O."/>
            <person name="Lanz C."/>
            <person name="Linke B."/>
            <person name="McHardy A.C."/>
            <person name="Meyer F."/>
            <person name="Mittenhuber G."/>
            <person name="Nies D.H."/>
            <person name="Niesbach-Kloesgen U."/>
            <person name="Patschkowski T."/>
            <person name="Rueckert C."/>
            <person name="Rupp O."/>
            <person name="Schneiker S."/>
            <person name="Schuster S.C."/>
            <person name="Vorhoelter F.J."/>
            <person name="Weber E."/>
            <person name="Puehler A."/>
            <person name="Bonas U."/>
            <person name="Bartels D."/>
            <person name="Kaiser O."/>
        </authorList>
    </citation>
    <scope>NUCLEOTIDE SEQUENCE [LARGE SCALE GENOMIC DNA]</scope>
    <source>
        <strain>85-10</strain>
    </source>
</reference>
<feature type="chain" id="PRO_0000231890" description="Serine O-succinyltransferase">
    <location>
        <begin position="1"/>
        <end position="400"/>
    </location>
</feature>
<feature type="domain" description="AB hydrolase-1" evidence="1">
    <location>
        <begin position="45"/>
        <end position="385"/>
    </location>
</feature>
<feature type="region of interest" description="Important for substrate specificity" evidence="1">
    <location>
        <begin position="52"/>
        <end position="55"/>
    </location>
</feature>
<feature type="active site" description="Nucleophile" evidence="1">
    <location>
        <position position="149"/>
    </location>
</feature>
<feature type="active site" evidence="1">
    <location>
        <position position="346"/>
    </location>
</feature>
<feature type="active site" evidence="1">
    <location>
        <position position="379"/>
    </location>
</feature>
<feature type="binding site" evidence="1">
    <location>
        <position position="218"/>
    </location>
    <ligand>
        <name>substrate</name>
    </ligand>
</feature>
<feature type="binding site" evidence="1">
    <location>
        <position position="380"/>
    </location>
    <ligand>
        <name>substrate</name>
    </ligand>
</feature>
<feature type="site" description="Important for acyl-CoA specificity" evidence="1">
    <location>
        <position position="186"/>
    </location>
</feature>
<comment type="function">
    <text evidence="1">Transfers a succinyl group from succinyl-CoA to L-serine, forming succinyl-L-serine.</text>
</comment>
<comment type="catalytic activity">
    <reaction evidence="1">
        <text>succinyl-CoA + L-serine = O-succinyl-L-serine + CoA</text>
        <dbReference type="Rhea" id="RHEA:52820"/>
        <dbReference type="ChEBI" id="CHEBI:33384"/>
        <dbReference type="ChEBI" id="CHEBI:57287"/>
        <dbReference type="ChEBI" id="CHEBI:57292"/>
        <dbReference type="ChEBI" id="CHEBI:136856"/>
    </reaction>
</comment>
<comment type="pathway">
    <text evidence="1">Amino-acid biosynthesis; L-cysteine biosynthesis; L-cysteine from L-serine: step 1/2.</text>
</comment>
<comment type="subunit">
    <text evidence="1">Homodimer.</text>
</comment>
<comment type="subcellular location">
    <subcellularLocation>
        <location evidence="1">Cytoplasm</location>
    </subcellularLocation>
</comment>
<comment type="similarity">
    <text evidence="1">Belongs to the AB hydrolase superfamily. MetX family.</text>
</comment>
<dbReference type="EC" id="2.3.1.-" evidence="1"/>
<dbReference type="EMBL" id="AM039952">
    <property type="protein sequence ID" value="CAJ24208.1"/>
    <property type="molecule type" value="Genomic_DNA"/>
</dbReference>
<dbReference type="RefSeq" id="WP_011347689.1">
    <property type="nucleotide sequence ID" value="NZ_CP017190.1"/>
</dbReference>
<dbReference type="SMR" id="Q3BSK1"/>
<dbReference type="STRING" id="456327.BJD11_10250"/>
<dbReference type="ESTHER" id="xanax-METX">
    <property type="family name" value="Homoserine_transacetylase"/>
</dbReference>
<dbReference type="KEGG" id="xcv:XCV2531"/>
<dbReference type="eggNOG" id="COG2021">
    <property type="taxonomic scope" value="Bacteria"/>
</dbReference>
<dbReference type="HOGENOM" id="CLU_028760_1_2_6"/>
<dbReference type="UniPathway" id="UPA00136">
    <property type="reaction ID" value="UER00199"/>
</dbReference>
<dbReference type="Proteomes" id="UP000007069">
    <property type="component" value="Chromosome"/>
</dbReference>
<dbReference type="GO" id="GO:0005737">
    <property type="term" value="C:cytoplasm"/>
    <property type="evidence" value="ECO:0007669"/>
    <property type="project" value="UniProtKB-SubCell"/>
</dbReference>
<dbReference type="GO" id="GO:0004414">
    <property type="term" value="F:homoserine O-acetyltransferase activity"/>
    <property type="evidence" value="ECO:0007669"/>
    <property type="project" value="TreeGrafter"/>
</dbReference>
<dbReference type="GO" id="GO:0160210">
    <property type="term" value="F:L-serine O-succinyltransferase activity"/>
    <property type="evidence" value="ECO:0007669"/>
    <property type="project" value="RHEA"/>
</dbReference>
<dbReference type="GO" id="GO:0006535">
    <property type="term" value="P:cysteine biosynthetic process from serine"/>
    <property type="evidence" value="ECO:0007669"/>
    <property type="project" value="UniProtKB-UniRule"/>
</dbReference>
<dbReference type="GO" id="GO:0009092">
    <property type="term" value="P:homoserine metabolic process"/>
    <property type="evidence" value="ECO:0007669"/>
    <property type="project" value="TreeGrafter"/>
</dbReference>
<dbReference type="GO" id="GO:0009086">
    <property type="term" value="P:methionine biosynthetic process"/>
    <property type="evidence" value="ECO:0007669"/>
    <property type="project" value="TreeGrafter"/>
</dbReference>
<dbReference type="Gene3D" id="1.10.1740.110">
    <property type="match status" value="1"/>
</dbReference>
<dbReference type="Gene3D" id="3.40.50.1820">
    <property type="entry name" value="alpha/beta hydrolase"/>
    <property type="match status" value="2"/>
</dbReference>
<dbReference type="HAMAP" id="MF_00296">
    <property type="entry name" value="MetX_acyltransf"/>
    <property type="match status" value="1"/>
</dbReference>
<dbReference type="InterPro" id="IPR000073">
    <property type="entry name" value="AB_hydrolase_1"/>
</dbReference>
<dbReference type="InterPro" id="IPR029058">
    <property type="entry name" value="AB_hydrolase_fold"/>
</dbReference>
<dbReference type="InterPro" id="IPR008220">
    <property type="entry name" value="HAT_MetX-like"/>
</dbReference>
<dbReference type="NCBIfam" id="TIGR01392">
    <property type="entry name" value="homoserO_Ac_trn"/>
    <property type="match status" value="1"/>
</dbReference>
<dbReference type="NCBIfam" id="NF001209">
    <property type="entry name" value="PRK00175.1"/>
    <property type="match status" value="1"/>
</dbReference>
<dbReference type="PANTHER" id="PTHR32268">
    <property type="entry name" value="HOMOSERINE O-ACETYLTRANSFERASE"/>
    <property type="match status" value="1"/>
</dbReference>
<dbReference type="PANTHER" id="PTHR32268:SF11">
    <property type="entry name" value="HOMOSERINE O-ACETYLTRANSFERASE"/>
    <property type="match status" value="1"/>
</dbReference>
<dbReference type="Pfam" id="PF00561">
    <property type="entry name" value="Abhydrolase_1"/>
    <property type="match status" value="1"/>
</dbReference>
<dbReference type="PIRSF" id="PIRSF000443">
    <property type="entry name" value="Homoser_Ac_trans"/>
    <property type="match status" value="1"/>
</dbReference>
<dbReference type="SUPFAM" id="SSF53474">
    <property type="entry name" value="alpha/beta-Hydrolases"/>
    <property type="match status" value="1"/>
</dbReference>
<organism>
    <name type="scientific">Xanthomonas euvesicatoria pv. vesicatoria (strain 85-10)</name>
    <name type="common">Xanthomonas campestris pv. vesicatoria</name>
    <dbReference type="NCBI Taxonomy" id="316273"/>
    <lineage>
        <taxon>Bacteria</taxon>
        <taxon>Pseudomonadati</taxon>
        <taxon>Pseudomonadota</taxon>
        <taxon>Gammaproteobacteria</taxon>
        <taxon>Lysobacterales</taxon>
        <taxon>Lysobacteraceae</taxon>
        <taxon>Xanthomonas</taxon>
    </lineage>
</organism>
<gene>
    <name type="primary">metX</name>
    <name type="ordered locus">XCV2531</name>
</gene>
<name>SST_XANE5</name>
<accession>Q3BSK1</accession>
<proteinExistence type="inferred from homology"/>
<keyword id="KW-0012">Acyltransferase</keyword>
<keyword id="KW-0028">Amino-acid biosynthesis</keyword>
<keyword id="KW-0198">Cysteine biosynthesis</keyword>
<keyword id="KW-0963">Cytoplasm</keyword>
<keyword id="KW-0808">Transferase</keyword>